<organism>
    <name type="scientific">Bradyrhizobium diazoefficiens (strain JCM 10833 / BCRC 13528 / IAM 13628 / NBRC 14792 / USDA 110)</name>
    <dbReference type="NCBI Taxonomy" id="224911"/>
    <lineage>
        <taxon>Bacteria</taxon>
        <taxon>Pseudomonadati</taxon>
        <taxon>Pseudomonadota</taxon>
        <taxon>Alphaproteobacteria</taxon>
        <taxon>Hyphomicrobiales</taxon>
        <taxon>Nitrobacteraceae</taxon>
        <taxon>Bradyrhizobium</taxon>
    </lineage>
</organism>
<keyword id="KW-0012">Acyltransferase</keyword>
<keyword id="KW-0963">Cytoplasm</keyword>
<keyword id="KW-1185">Reference proteome</keyword>
<keyword id="KW-0808">Transferase</keyword>
<name>BPT_BRADU</name>
<proteinExistence type="inferred from homology"/>
<comment type="function">
    <text evidence="1">Functions in the N-end rule pathway of protein degradation where it conjugates Leu from its aminoacyl-tRNA to the N-termini of proteins containing an N-terminal aspartate or glutamate.</text>
</comment>
<comment type="catalytic activity">
    <reaction evidence="1">
        <text>N-terminal L-glutamyl-[protein] + L-leucyl-tRNA(Leu) = N-terminal L-leucyl-L-glutamyl-[protein] + tRNA(Leu) + H(+)</text>
        <dbReference type="Rhea" id="RHEA:50412"/>
        <dbReference type="Rhea" id="RHEA-COMP:9613"/>
        <dbReference type="Rhea" id="RHEA-COMP:9622"/>
        <dbReference type="Rhea" id="RHEA-COMP:12664"/>
        <dbReference type="Rhea" id="RHEA-COMP:12668"/>
        <dbReference type="ChEBI" id="CHEBI:15378"/>
        <dbReference type="ChEBI" id="CHEBI:64721"/>
        <dbReference type="ChEBI" id="CHEBI:78442"/>
        <dbReference type="ChEBI" id="CHEBI:78494"/>
        <dbReference type="ChEBI" id="CHEBI:133041"/>
        <dbReference type="EC" id="2.3.2.29"/>
    </reaction>
</comment>
<comment type="catalytic activity">
    <reaction evidence="1">
        <text>N-terminal L-aspartyl-[protein] + L-leucyl-tRNA(Leu) = N-terminal L-leucyl-L-aspartyl-[protein] + tRNA(Leu) + H(+)</text>
        <dbReference type="Rhea" id="RHEA:50420"/>
        <dbReference type="Rhea" id="RHEA-COMP:9613"/>
        <dbReference type="Rhea" id="RHEA-COMP:9622"/>
        <dbReference type="Rhea" id="RHEA-COMP:12669"/>
        <dbReference type="Rhea" id="RHEA-COMP:12674"/>
        <dbReference type="ChEBI" id="CHEBI:15378"/>
        <dbReference type="ChEBI" id="CHEBI:64720"/>
        <dbReference type="ChEBI" id="CHEBI:78442"/>
        <dbReference type="ChEBI" id="CHEBI:78494"/>
        <dbReference type="ChEBI" id="CHEBI:133042"/>
        <dbReference type="EC" id="2.3.2.29"/>
    </reaction>
</comment>
<comment type="subcellular location">
    <subcellularLocation>
        <location evidence="1">Cytoplasm</location>
    </subcellularLocation>
</comment>
<comment type="similarity">
    <text evidence="1">Belongs to the R-transferase family. Bpt subfamily.</text>
</comment>
<dbReference type="EC" id="2.3.2.29" evidence="1"/>
<dbReference type="EMBL" id="BA000040">
    <property type="protein sequence ID" value="BAC50304.1"/>
    <property type="molecule type" value="Genomic_DNA"/>
</dbReference>
<dbReference type="RefSeq" id="NP_771679.1">
    <property type="nucleotide sequence ID" value="NC_004463.1"/>
</dbReference>
<dbReference type="RefSeq" id="WP_011087800.1">
    <property type="nucleotide sequence ID" value="NC_004463.1"/>
</dbReference>
<dbReference type="SMR" id="Q89K72"/>
<dbReference type="STRING" id="224911.AAV28_22560"/>
<dbReference type="EnsemblBacteria" id="BAC50304">
    <property type="protein sequence ID" value="BAC50304"/>
    <property type="gene ID" value="BAC50304"/>
</dbReference>
<dbReference type="GeneID" id="46492045"/>
<dbReference type="KEGG" id="bja:blr5039"/>
<dbReference type="PATRIC" id="fig|224911.44.peg.4904"/>
<dbReference type="eggNOG" id="COG2935">
    <property type="taxonomic scope" value="Bacteria"/>
</dbReference>
<dbReference type="HOGENOM" id="CLU_077607_1_0_5"/>
<dbReference type="InParanoid" id="Q89K72"/>
<dbReference type="OrthoDB" id="9782022at2"/>
<dbReference type="PhylomeDB" id="Q89K72"/>
<dbReference type="Proteomes" id="UP000002526">
    <property type="component" value="Chromosome"/>
</dbReference>
<dbReference type="GO" id="GO:0005737">
    <property type="term" value="C:cytoplasm"/>
    <property type="evidence" value="ECO:0000318"/>
    <property type="project" value="GO_Central"/>
</dbReference>
<dbReference type="GO" id="GO:0004057">
    <property type="term" value="F:arginyl-tRNA--protein transferase activity"/>
    <property type="evidence" value="ECO:0000318"/>
    <property type="project" value="GO_Central"/>
</dbReference>
<dbReference type="GO" id="GO:0008914">
    <property type="term" value="F:leucyl-tRNA--protein transferase activity"/>
    <property type="evidence" value="ECO:0007669"/>
    <property type="project" value="UniProtKB-UniRule"/>
</dbReference>
<dbReference type="GO" id="GO:0010498">
    <property type="term" value="P:proteasomal protein catabolic process"/>
    <property type="evidence" value="ECO:0000318"/>
    <property type="project" value="GO_Central"/>
</dbReference>
<dbReference type="GO" id="GO:0071596">
    <property type="term" value="P:ubiquitin-dependent protein catabolic process via the N-end rule pathway"/>
    <property type="evidence" value="ECO:0007669"/>
    <property type="project" value="InterPro"/>
</dbReference>
<dbReference type="HAMAP" id="MF_00689">
    <property type="entry name" value="Bpt"/>
    <property type="match status" value="1"/>
</dbReference>
<dbReference type="InterPro" id="IPR016181">
    <property type="entry name" value="Acyl_CoA_acyltransferase"/>
</dbReference>
<dbReference type="InterPro" id="IPR017138">
    <property type="entry name" value="Asp_Glu_LeuTrfase"/>
</dbReference>
<dbReference type="InterPro" id="IPR030700">
    <property type="entry name" value="N-end_Aminoacyl_Trfase"/>
</dbReference>
<dbReference type="InterPro" id="IPR007472">
    <property type="entry name" value="N-end_Aminoacyl_Trfase_C"/>
</dbReference>
<dbReference type="InterPro" id="IPR007471">
    <property type="entry name" value="N-end_Aminoacyl_Trfase_N"/>
</dbReference>
<dbReference type="NCBIfam" id="NF002342">
    <property type="entry name" value="PRK01305.1-3"/>
    <property type="match status" value="1"/>
</dbReference>
<dbReference type="NCBIfam" id="NF002343">
    <property type="entry name" value="PRK01305.1-4"/>
    <property type="match status" value="1"/>
</dbReference>
<dbReference type="NCBIfam" id="NF002346">
    <property type="entry name" value="PRK01305.2-3"/>
    <property type="match status" value="1"/>
</dbReference>
<dbReference type="PANTHER" id="PTHR21367">
    <property type="entry name" value="ARGININE-TRNA-PROTEIN TRANSFERASE 1"/>
    <property type="match status" value="1"/>
</dbReference>
<dbReference type="PANTHER" id="PTHR21367:SF1">
    <property type="entry name" value="ARGINYL-TRNA--PROTEIN TRANSFERASE 1"/>
    <property type="match status" value="1"/>
</dbReference>
<dbReference type="Pfam" id="PF04377">
    <property type="entry name" value="ATE_C"/>
    <property type="match status" value="1"/>
</dbReference>
<dbReference type="Pfam" id="PF04376">
    <property type="entry name" value="ATE_N"/>
    <property type="match status" value="1"/>
</dbReference>
<dbReference type="PIRSF" id="PIRSF037208">
    <property type="entry name" value="ATE_pro_prd"/>
    <property type="match status" value="1"/>
</dbReference>
<dbReference type="SUPFAM" id="SSF55729">
    <property type="entry name" value="Acyl-CoA N-acyltransferases (Nat)"/>
    <property type="match status" value="1"/>
</dbReference>
<accession>Q89K72</accession>
<feature type="chain" id="PRO_0000195098" description="Aspartate/glutamate leucyltransferase">
    <location>
        <begin position="1"/>
        <end position="258"/>
    </location>
</feature>
<gene>
    <name evidence="1" type="primary">bpt</name>
    <name type="ordered locus">blr5039</name>
</gene>
<reference key="1">
    <citation type="journal article" date="2002" name="DNA Res.">
        <title>Complete genomic sequence of nitrogen-fixing symbiotic bacterium Bradyrhizobium japonicum USDA110.</title>
        <authorList>
            <person name="Kaneko T."/>
            <person name="Nakamura Y."/>
            <person name="Sato S."/>
            <person name="Minamisawa K."/>
            <person name="Uchiumi T."/>
            <person name="Sasamoto S."/>
            <person name="Watanabe A."/>
            <person name="Idesawa K."/>
            <person name="Iriguchi M."/>
            <person name="Kawashima K."/>
            <person name="Kohara M."/>
            <person name="Matsumoto M."/>
            <person name="Shimpo S."/>
            <person name="Tsuruoka H."/>
            <person name="Wada T."/>
            <person name="Yamada M."/>
            <person name="Tabata S."/>
        </authorList>
    </citation>
    <scope>NUCLEOTIDE SEQUENCE [LARGE SCALE GENOMIC DNA]</scope>
    <source>
        <strain>JCM 10833 / BCRC 13528 / IAM 13628 / NBRC 14792 / USDA 110</strain>
    </source>
</reference>
<sequence>MTQHSRDTPQFYLTAPSPCPYLPGRHERKVFTHLVGDRAGDLNDLLTHGGFRRSQSIAYRPACDQCRACVSVRVIANEFRPSRNFRKVIARNADIIGEQRSAVPTSEQYSVFRAYLDARHRHGGMADMTVLDYAMMVEDSHVETRIIEYRKRGPDSGITGRGEELIAVALTDVLSDGLSMVYSFFEPSQVSRSMGTFMILDHIARARRQGLPYVYLGYWIEGSKKMDYKARFLPQQRLAPSGWLRIDAQGDAASEPQD</sequence>
<evidence type="ECO:0000255" key="1">
    <source>
        <dbReference type="HAMAP-Rule" id="MF_00689"/>
    </source>
</evidence>
<protein>
    <recommendedName>
        <fullName evidence="1">Aspartate/glutamate leucyltransferase</fullName>
        <ecNumber evidence="1">2.3.2.29</ecNumber>
    </recommendedName>
</protein>